<reference key="1">
    <citation type="journal article" date="2007" name="BMC Microbiol.">
        <title>Subtle genetic changes enhance virulence of methicillin resistant and sensitive Staphylococcus aureus.</title>
        <authorList>
            <person name="Highlander S.K."/>
            <person name="Hulten K.G."/>
            <person name="Qin X."/>
            <person name="Jiang H."/>
            <person name="Yerrapragada S."/>
            <person name="Mason E.O. Jr."/>
            <person name="Shang Y."/>
            <person name="Williams T.M."/>
            <person name="Fortunov R.M."/>
            <person name="Liu Y."/>
            <person name="Igboeli O."/>
            <person name="Petrosino J."/>
            <person name="Tirumalai M."/>
            <person name="Uzman A."/>
            <person name="Fox G.E."/>
            <person name="Cardenas A.M."/>
            <person name="Muzny D.M."/>
            <person name="Hemphill L."/>
            <person name="Ding Y."/>
            <person name="Dugan S."/>
            <person name="Blyth P.R."/>
            <person name="Buhay C.J."/>
            <person name="Dinh H.H."/>
            <person name="Hawes A.C."/>
            <person name="Holder M."/>
            <person name="Kovar C.L."/>
            <person name="Lee S.L."/>
            <person name="Liu W."/>
            <person name="Nazareth L.V."/>
            <person name="Wang Q."/>
            <person name="Zhou J."/>
            <person name="Kaplan S.L."/>
            <person name="Weinstock G.M."/>
        </authorList>
    </citation>
    <scope>NUCLEOTIDE SEQUENCE [LARGE SCALE GENOMIC DNA]</scope>
    <source>
        <strain>USA300 / TCH1516</strain>
    </source>
</reference>
<keyword id="KW-0030">Aminoacyl-tRNA synthetase</keyword>
<keyword id="KW-0067">ATP-binding</keyword>
<keyword id="KW-0963">Cytoplasm</keyword>
<keyword id="KW-0436">Ligase</keyword>
<keyword id="KW-0547">Nucleotide-binding</keyword>
<keyword id="KW-0648">Protein biosynthesis</keyword>
<evidence type="ECO:0000255" key="1">
    <source>
        <dbReference type="HAMAP-Rule" id="MF_00253"/>
    </source>
</evidence>
<comment type="function">
    <text evidence="1">Catalyzes the attachment of glycine to tRNA(Gly).</text>
</comment>
<comment type="catalytic activity">
    <reaction evidence="1">
        <text>tRNA(Gly) + glycine + ATP = glycyl-tRNA(Gly) + AMP + diphosphate</text>
        <dbReference type="Rhea" id="RHEA:16013"/>
        <dbReference type="Rhea" id="RHEA-COMP:9664"/>
        <dbReference type="Rhea" id="RHEA-COMP:9683"/>
        <dbReference type="ChEBI" id="CHEBI:30616"/>
        <dbReference type="ChEBI" id="CHEBI:33019"/>
        <dbReference type="ChEBI" id="CHEBI:57305"/>
        <dbReference type="ChEBI" id="CHEBI:78442"/>
        <dbReference type="ChEBI" id="CHEBI:78522"/>
        <dbReference type="ChEBI" id="CHEBI:456215"/>
        <dbReference type="EC" id="6.1.1.14"/>
    </reaction>
</comment>
<comment type="subunit">
    <text evidence="1">Homodimer.</text>
</comment>
<comment type="subcellular location">
    <subcellularLocation>
        <location evidence="1">Cytoplasm</location>
    </subcellularLocation>
</comment>
<comment type="similarity">
    <text evidence="1">Belongs to the class-II aminoacyl-tRNA synthetase family.</text>
</comment>
<name>SYG_STAAT</name>
<feature type="chain" id="PRO_1000078518" description="Glycine--tRNA ligase">
    <location>
        <begin position="1"/>
        <end position="463"/>
    </location>
</feature>
<feature type="binding site" evidence="1">
    <location>
        <position position="98"/>
    </location>
    <ligand>
        <name>substrate</name>
    </ligand>
</feature>
<feature type="binding site" evidence="1">
    <location>
        <position position="174"/>
    </location>
    <ligand>
        <name>substrate</name>
    </ligand>
</feature>
<feature type="binding site" evidence="1">
    <location>
        <begin position="206"/>
        <end position="208"/>
    </location>
    <ligand>
        <name>ATP</name>
        <dbReference type="ChEBI" id="CHEBI:30616"/>
    </ligand>
</feature>
<feature type="binding site" evidence="1">
    <location>
        <begin position="216"/>
        <end position="221"/>
    </location>
    <ligand>
        <name>ATP</name>
        <dbReference type="ChEBI" id="CHEBI:30616"/>
    </ligand>
</feature>
<feature type="binding site" evidence="1">
    <location>
        <begin position="221"/>
        <end position="225"/>
    </location>
    <ligand>
        <name>substrate</name>
    </ligand>
</feature>
<feature type="binding site" evidence="1">
    <location>
        <begin position="290"/>
        <end position="291"/>
    </location>
    <ligand>
        <name>ATP</name>
        <dbReference type="ChEBI" id="CHEBI:30616"/>
    </ligand>
</feature>
<feature type="binding site" evidence="1">
    <location>
        <begin position="330"/>
        <end position="334"/>
    </location>
    <ligand>
        <name>substrate</name>
    </ligand>
</feature>
<feature type="binding site" evidence="1">
    <location>
        <begin position="334"/>
        <end position="337"/>
    </location>
    <ligand>
        <name>ATP</name>
        <dbReference type="ChEBI" id="CHEBI:30616"/>
    </ligand>
</feature>
<accession>A8Z4A4</accession>
<sequence length="463" mass="53620">MAKDMDTIVSLAKHRGFVFPGSDIYGGLSNTWDYGPLGVELKNNVKKAWWQKFITQSPFNVGIDAAILMNPKVWEASGHLNNFNDPMIDNKDSKIRYRADKLIEDYMQDVKGDENFIADGLSFEQMKKIIDDEGIVCPVSKTANWTEIRQFNLMFKTFQGVTEDSTNEIFLRPETAQGIFVNYKNVQRSMRKKLPFGIGQIGKSFRNEITPGNFIFRTREFEQMELEFFCKPGEEIEWQNYWKTFASDWLTSLNMSSENMRLRDHDEDELSHYSNATTDIEYKFPFGWGELWGIASRTDFDLRKHAEHSGEDFRYHDPETNEKYIPYCIEPSLGADRVTLAFLCDAYDEEGVEGSKDARTVLHFHPALAPYKAAILPLSKKLSGEAIKIFEQLSSKFSIDFDESQSIGKRYRRQDEIGTPYCVTFDFDSLEDNQVTVRDRDSMEQVRMPISELEAFLTEKTKF</sequence>
<proteinExistence type="inferred from homology"/>
<protein>
    <recommendedName>
        <fullName evidence="1">Glycine--tRNA ligase</fullName>
        <ecNumber evidence="1">6.1.1.14</ecNumber>
    </recommendedName>
    <alternativeName>
        <fullName evidence="1">Glycyl-tRNA synthetase</fullName>
        <shortName evidence="1">GlyRS</shortName>
    </alternativeName>
</protein>
<gene>
    <name evidence="1" type="primary">glyQS</name>
    <name type="ordered locus">USA300HOU_1566</name>
</gene>
<dbReference type="EC" id="6.1.1.14" evidence="1"/>
<dbReference type="EMBL" id="CP000730">
    <property type="protein sequence ID" value="ABX29573.1"/>
    <property type="molecule type" value="Genomic_DNA"/>
</dbReference>
<dbReference type="RefSeq" id="WP_001030080.1">
    <property type="nucleotide sequence ID" value="NC_010079.1"/>
</dbReference>
<dbReference type="SMR" id="A8Z4A4"/>
<dbReference type="KEGG" id="sax:USA300HOU_1566"/>
<dbReference type="HOGENOM" id="CLU_015515_2_1_9"/>
<dbReference type="GO" id="GO:0005737">
    <property type="term" value="C:cytoplasm"/>
    <property type="evidence" value="ECO:0007669"/>
    <property type="project" value="UniProtKB-SubCell"/>
</dbReference>
<dbReference type="GO" id="GO:0005524">
    <property type="term" value="F:ATP binding"/>
    <property type="evidence" value="ECO:0007669"/>
    <property type="project" value="UniProtKB-UniRule"/>
</dbReference>
<dbReference type="GO" id="GO:0140096">
    <property type="term" value="F:catalytic activity, acting on a protein"/>
    <property type="evidence" value="ECO:0007669"/>
    <property type="project" value="UniProtKB-ARBA"/>
</dbReference>
<dbReference type="GO" id="GO:0004820">
    <property type="term" value="F:glycine-tRNA ligase activity"/>
    <property type="evidence" value="ECO:0000250"/>
    <property type="project" value="UniProtKB"/>
</dbReference>
<dbReference type="GO" id="GO:0046983">
    <property type="term" value="F:protein dimerization activity"/>
    <property type="evidence" value="ECO:0000250"/>
    <property type="project" value="UniProtKB"/>
</dbReference>
<dbReference type="GO" id="GO:0016740">
    <property type="term" value="F:transferase activity"/>
    <property type="evidence" value="ECO:0007669"/>
    <property type="project" value="UniProtKB-ARBA"/>
</dbReference>
<dbReference type="GO" id="GO:0006426">
    <property type="term" value="P:glycyl-tRNA aminoacylation"/>
    <property type="evidence" value="ECO:0007669"/>
    <property type="project" value="UniProtKB-UniRule"/>
</dbReference>
<dbReference type="CDD" id="cd00774">
    <property type="entry name" value="GlyRS-like_core"/>
    <property type="match status" value="1"/>
</dbReference>
<dbReference type="CDD" id="cd00858">
    <property type="entry name" value="GlyRS_anticodon"/>
    <property type="match status" value="1"/>
</dbReference>
<dbReference type="FunFam" id="3.40.50.800:FF:000002">
    <property type="entry name" value="Glycine--tRNA ligase"/>
    <property type="match status" value="1"/>
</dbReference>
<dbReference type="Gene3D" id="3.30.40.230">
    <property type="match status" value="1"/>
</dbReference>
<dbReference type="Gene3D" id="3.40.50.800">
    <property type="entry name" value="Anticodon-binding domain"/>
    <property type="match status" value="1"/>
</dbReference>
<dbReference type="Gene3D" id="3.30.930.10">
    <property type="entry name" value="Bira Bifunctional Protein, Domain 2"/>
    <property type="match status" value="1"/>
</dbReference>
<dbReference type="HAMAP" id="MF_00253_B">
    <property type="entry name" value="Gly_tRNA_synth_B"/>
    <property type="match status" value="1"/>
</dbReference>
<dbReference type="InterPro" id="IPR002314">
    <property type="entry name" value="aa-tRNA-synt_IIb"/>
</dbReference>
<dbReference type="InterPro" id="IPR006195">
    <property type="entry name" value="aa-tRNA-synth_II"/>
</dbReference>
<dbReference type="InterPro" id="IPR045864">
    <property type="entry name" value="aa-tRNA-synth_II/BPL/LPL"/>
</dbReference>
<dbReference type="InterPro" id="IPR004154">
    <property type="entry name" value="Anticodon-bd"/>
</dbReference>
<dbReference type="InterPro" id="IPR036621">
    <property type="entry name" value="Anticodon-bd_dom_sf"/>
</dbReference>
<dbReference type="InterPro" id="IPR027031">
    <property type="entry name" value="Gly-tRNA_synthase/POLG2"/>
</dbReference>
<dbReference type="InterPro" id="IPR022961">
    <property type="entry name" value="Gly_tRNA_ligase_bac"/>
</dbReference>
<dbReference type="InterPro" id="IPR033731">
    <property type="entry name" value="GlyRS-like_core"/>
</dbReference>
<dbReference type="InterPro" id="IPR002315">
    <property type="entry name" value="tRNA-synt_gly"/>
</dbReference>
<dbReference type="NCBIfam" id="TIGR00389">
    <property type="entry name" value="glyS_dimeric"/>
    <property type="match status" value="1"/>
</dbReference>
<dbReference type="NCBIfam" id="NF003211">
    <property type="entry name" value="PRK04173.1"/>
    <property type="match status" value="1"/>
</dbReference>
<dbReference type="PANTHER" id="PTHR10745:SF8">
    <property type="entry name" value="DNA POLYMERASE SUBUNIT GAMMA-2, MITOCHONDRIAL"/>
    <property type="match status" value="1"/>
</dbReference>
<dbReference type="PANTHER" id="PTHR10745">
    <property type="entry name" value="GLYCYL-TRNA SYNTHETASE/DNA POLYMERASE SUBUNIT GAMMA-2"/>
    <property type="match status" value="1"/>
</dbReference>
<dbReference type="Pfam" id="PF03129">
    <property type="entry name" value="HGTP_anticodon"/>
    <property type="match status" value="1"/>
</dbReference>
<dbReference type="Pfam" id="PF00587">
    <property type="entry name" value="tRNA-synt_2b"/>
    <property type="match status" value="1"/>
</dbReference>
<dbReference type="PRINTS" id="PR01043">
    <property type="entry name" value="TRNASYNTHGLY"/>
</dbReference>
<dbReference type="SUPFAM" id="SSF52954">
    <property type="entry name" value="Class II aaRS ABD-related"/>
    <property type="match status" value="1"/>
</dbReference>
<dbReference type="SUPFAM" id="SSF55681">
    <property type="entry name" value="Class II aaRS and biotin synthetases"/>
    <property type="match status" value="1"/>
</dbReference>
<dbReference type="PROSITE" id="PS50862">
    <property type="entry name" value="AA_TRNA_LIGASE_II"/>
    <property type="match status" value="1"/>
</dbReference>
<organism>
    <name type="scientific">Staphylococcus aureus (strain USA300 / TCH1516)</name>
    <dbReference type="NCBI Taxonomy" id="451516"/>
    <lineage>
        <taxon>Bacteria</taxon>
        <taxon>Bacillati</taxon>
        <taxon>Bacillota</taxon>
        <taxon>Bacilli</taxon>
        <taxon>Bacillales</taxon>
        <taxon>Staphylococcaceae</taxon>
        <taxon>Staphylococcus</taxon>
    </lineage>
</organism>